<name>Y2942_XANAC</name>
<evidence type="ECO:0000255" key="1">
    <source>
        <dbReference type="HAMAP-Rule" id="MF_00657"/>
    </source>
</evidence>
<protein>
    <recommendedName>
        <fullName evidence="1">PKHD-type hydroxylase XAC2942</fullName>
        <ecNumber evidence="1">1.14.11.-</ecNumber>
    </recommendedName>
</protein>
<comment type="cofactor">
    <cofactor evidence="1">
        <name>Fe(2+)</name>
        <dbReference type="ChEBI" id="CHEBI:29033"/>
    </cofactor>
    <text evidence="1">Binds 1 Fe(2+) ion per subunit.</text>
</comment>
<comment type="cofactor">
    <cofactor evidence="1">
        <name>L-ascorbate</name>
        <dbReference type="ChEBI" id="CHEBI:38290"/>
    </cofactor>
</comment>
<accession>Q8PIF6</accession>
<sequence>MLLPIPDVLSPAQLSQLRAQLDVADWADGRITAGHQSAQAKDNAQLPEDSAVAREAGALVLEALARSSTFFSAVLPRRIYPPLFNRYSGGQSFGYHVDNAVRYDRSRGGAEAVRTDVSATLFLSDPDSYDGGELVIEDTYGTQSVKLPAGHLVIYPGTSLHRVMPVTRGARVACFFWAQSMLRDAAQRRLLFELDVSIRRLTQDTPGHPSLIQLTGVYHNLLRQWADV</sequence>
<proteinExistence type="inferred from homology"/>
<reference key="1">
    <citation type="journal article" date="2002" name="Nature">
        <title>Comparison of the genomes of two Xanthomonas pathogens with differing host specificities.</title>
        <authorList>
            <person name="da Silva A.C.R."/>
            <person name="Ferro J.A."/>
            <person name="Reinach F.C."/>
            <person name="Farah C.S."/>
            <person name="Furlan L.R."/>
            <person name="Quaggio R.B."/>
            <person name="Monteiro-Vitorello C.B."/>
            <person name="Van Sluys M.A."/>
            <person name="Almeida N.F. Jr."/>
            <person name="Alves L.M.C."/>
            <person name="do Amaral A.M."/>
            <person name="Bertolini M.C."/>
            <person name="Camargo L.E.A."/>
            <person name="Camarotte G."/>
            <person name="Cannavan F."/>
            <person name="Cardozo J."/>
            <person name="Chambergo F."/>
            <person name="Ciapina L.P."/>
            <person name="Cicarelli R.M.B."/>
            <person name="Coutinho L.L."/>
            <person name="Cursino-Santos J.R."/>
            <person name="El-Dorry H."/>
            <person name="Faria J.B."/>
            <person name="Ferreira A.J.S."/>
            <person name="Ferreira R.C.C."/>
            <person name="Ferro M.I.T."/>
            <person name="Formighieri E.F."/>
            <person name="Franco M.C."/>
            <person name="Greggio C.C."/>
            <person name="Gruber A."/>
            <person name="Katsuyama A.M."/>
            <person name="Kishi L.T."/>
            <person name="Leite R.P."/>
            <person name="Lemos E.G.M."/>
            <person name="Lemos M.V.F."/>
            <person name="Locali E.C."/>
            <person name="Machado M.A."/>
            <person name="Madeira A.M.B.N."/>
            <person name="Martinez-Rossi N.M."/>
            <person name="Martins E.C."/>
            <person name="Meidanis J."/>
            <person name="Menck C.F.M."/>
            <person name="Miyaki C.Y."/>
            <person name="Moon D.H."/>
            <person name="Moreira L.M."/>
            <person name="Novo M.T.M."/>
            <person name="Okura V.K."/>
            <person name="Oliveira M.C."/>
            <person name="Oliveira V.R."/>
            <person name="Pereira H.A."/>
            <person name="Rossi A."/>
            <person name="Sena J.A.D."/>
            <person name="Silva C."/>
            <person name="de Souza R.F."/>
            <person name="Spinola L.A.F."/>
            <person name="Takita M.A."/>
            <person name="Tamura R.E."/>
            <person name="Teixeira E.C."/>
            <person name="Tezza R.I.D."/>
            <person name="Trindade dos Santos M."/>
            <person name="Truffi D."/>
            <person name="Tsai S.M."/>
            <person name="White F.F."/>
            <person name="Setubal J.C."/>
            <person name="Kitajima J.P."/>
        </authorList>
    </citation>
    <scope>NUCLEOTIDE SEQUENCE [LARGE SCALE GENOMIC DNA]</scope>
    <source>
        <strain>306</strain>
    </source>
</reference>
<feature type="chain" id="PRO_0000206685" description="PKHD-type hydroxylase XAC2942">
    <location>
        <begin position="1"/>
        <end position="228"/>
    </location>
</feature>
<feature type="domain" description="Fe2OG dioxygenase" evidence="1">
    <location>
        <begin position="78"/>
        <end position="180"/>
    </location>
</feature>
<feature type="binding site" evidence="1">
    <location>
        <position position="96"/>
    </location>
    <ligand>
        <name>Fe cation</name>
        <dbReference type="ChEBI" id="CHEBI:24875"/>
    </ligand>
</feature>
<feature type="binding site" evidence="1">
    <location>
        <position position="98"/>
    </location>
    <ligand>
        <name>Fe cation</name>
        <dbReference type="ChEBI" id="CHEBI:24875"/>
    </ligand>
</feature>
<feature type="binding site" evidence="1">
    <location>
        <position position="161"/>
    </location>
    <ligand>
        <name>Fe cation</name>
        <dbReference type="ChEBI" id="CHEBI:24875"/>
    </ligand>
</feature>
<feature type="binding site" evidence="1">
    <location>
        <position position="171"/>
    </location>
    <ligand>
        <name>2-oxoglutarate</name>
        <dbReference type="ChEBI" id="CHEBI:16810"/>
    </ligand>
</feature>
<gene>
    <name type="ordered locus">XAC2942</name>
</gene>
<organism>
    <name type="scientific">Xanthomonas axonopodis pv. citri (strain 306)</name>
    <dbReference type="NCBI Taxonomy" id="190486"/>
    <lineage>
        <taxon>Bacteria</taxon>
        <taxon>Pseudomonadati</taxon>
        <taxon>Pseudomonadota</taxon>
        <taxon>Gammaproteobacteria</taxon>
        <taxon>Lysobacterales</taxon>
        <taxon>Lysobacteraceae</taxon>
        <taxon>Xanthomonas</taxon>
    </lineage>
</organism>
<dbReference type="EC" id="1.14.11.-" evidence="1"/>
<dbReference type="EMBL" id="AE008923">
    <property type="protein sequence ID" value="AAM37787.1"/>
    <property type="molecule type" value="Genomic_DNA"/>
</dbReference>
<dbReference type="RefSeq" id="WP_005913321.1">
    <property type="nucleotide sequence ID" value="NC_003919.1"/>
</dbReference>
<dbReference type="SMR" id="Q8PIF6"/>
<dbReference type="KEGG" id="xac:XAC2942"/>
<dbReference type="eggNOG" id="COG3128">
    <property type="taxonomic scope" value="Bacteria"/>
</dbReference>
<dbReference type="HOGENOM" id="CLU_106663_0_0_6"/>
<dbReference type="Proteomes" id="UP000000576">
    <property type="component" value="Chromosome"/>
</dbReference>
<dbReference type="GO" id="GO:0016706">
    <property type="term" value="F:2-oxoglutarate-dependent dioxygenase activity"/>
    <property type="evidence" value="ECO:0007669"/>
    <property type="project" value="UniProtKB-UniRule"/>
</dbReference>
<dbReference type="GO" id="GO:0005506">
    <property type="term" value="F:iron ion binding"/>
    <property type="evidence" value="ECO:0007669"/>
    <property type="project" value="UniProtKB-UniRule"/>
</dbReference>
<dbReference type="GO" id="GO:0031418">
    <property type="term" value="F:L-ascorbic acid binding"/>
    <property type="evidence" value="ECO:0007669"/>
    <property type="project" value="UniProtKB-KW"/>
</dbReference>
<dbReference type="GO" id="GO:0006974">
    <property type="term" value="P:DNA damage response"/>
    <property type="evidence" value="ECO:0007669"/>
    <property type="project" value="TreeGrafter"/>
</dbReference>
<dbReference type="GO" id="GO:0006879">
    <property type="term" value="P:intracellular iron ion homeostasis"/>
    <property type="evidence" value="ECO:0007669"/>
    <property type="project" value="TreeGrafter"/>
</dbReference>
<dbReference type="FunFam" id="2.60.120.620:FF:000006">
    <property type="entry name" value="PKHD-type hydroxylase YbiX"/>
    <property type="match status" value="1"/>
</dbReference>
<dbReference type="Gene3D" id="2.60.120.620">
    <property type="entry name" value="q2cbj1_9rhob like domain"/>
    <property type="match status" value="1"/>
</dbReference>
<dbReference type="Gene3D" id="4.10.860.20">
    <property type="entry name" value="Rabenosyn, Rab binding domain"/>
    <property type="match status" value="1"/>
</dbReference>
<dbReference type="HAMAP" id="MF_00657">
    <property type="entry name" value="Hydroxyl_YbiX"/>
    <property type="match status" value="1"/>
</dbReference>
<dbReference type="InterPro" id="IPR005123">
    <property type="entry name" value="Oxoglu/Fe-dep_dioxygenase_dom"/>
</dbReference>
<dbReference type="InterPro" id="IPR041097">
    <property type="entry name" value="PKHD_C"/>
</dbReference>
<dbReference type="InterPro" id="IPR023550">
    <property type="entry name" value="PKHD_hydroxylase"/>
</dbReference>
<dbReference type="InterPro" id="IPR006620">
    <property type="entry name" value="Pro_4_hyd_alph"/>
</dbReference>
<dbReference type="InterPro" id="IPR044862">
    <property type="entry name" value="Pro_4_hyd_alph_FE2OG_OXY"/>
</dbReference>
<dbReference type="NCBIfam" id="NF003973">
    <property type="entry name" value="PRK05467.1-2"/>
    <property type="match status" value="1"/>
</dbReference>
<dbReference type="NCBIfam" id="NF003974">
    <property type="entry name" value="PRK05467.1-3"/>
    <property type="match status" value="1"/>
</dbReference>
<dbReference type="NCBIfam" id="NF003975">
    <property type="entry name" value="PRK05467.1-4"/>
    <property type="match status" value="1"/>
</dbReference>
<dbReference type="PANTHER" id="PTHR41536">
    <property type="entry name" value="PKHD-TYPE HYDROXYLASE YBIX"/>
    <property type="match status" value="1"/>
</dbReference>
<dbReference type="PANTHER" id="PTHR41536:SF1">
    <property type="entry name" value="PKHD-TYPE HYDROXYLASE YBIX"/>
    <property type="match status" value="1"/>
</dbReference>
<dbReference type="Pfam" id="PF13640">
    <property type="entry name" value="2OG-FeII_Oxy_3"/>
    <property type="match status" value="1"/>
</dbReference>
<dbReference type="Pfam" id="PF18331">
    <property type="entry name" value="PKHD_C"/>
    <property type="match status" value="1"/>
</dbReference>
<dbReference type="SMART" id="SM00702">
    <property type="entry name" value="P4Hc"/>
    <property type="match status" value="1"/>
</dbReference>
<dbReference type="SUPFAM" id="SSF51197">
    <property type="entry name" value="Clavaminate synthase-like"/>
    <property type="match status" value="1"/>
</dbReference>
<dbReference type="PROSITE" id="PS51471">
    <property type="entry name" value="FE2OG_OXY"/>
    <property type="match status" value="1"/>
</dbReference>
<keyword id="KW-0223">Dioxygenase</keyword>
<keyword id="KW-0408">Iron</keyword>
<keyword id="KW-0479">Metal-binding</keyword>
<keyword id="KW-0560">Oxidoreductase</keyword>
<keyword id="KW-0847">Vitamin C</keyword>